<organism>
    <name type="scientific">Wolbachia sp. subsp. Brugia malayi (strain TRS)</name>
    <dbReference type="NCBI Taxonomy" id="292805"/>
    <lineage>
        <taxon>Bacteria</taxon>
        <taxon>Pseudomonadati</taxon>
        <taxon>Pseudomonadota</taxon>
        <taxon>Alphaproteobacteria</taxon>
        <taxon>Rickettsiales</taxon>
        <taxon>Anaplasmataceae</taxon>
        <taxon>Wolbachieae</taxon>
        <taxon>Wolbachia</taxon>
    </lineage>
</organism>
<evidence type="ECO:0000255" key="1">
    <source>
        <dbReference type="HAMAP-Rule" id="MF_00251"/>
    </source>
</evidence>
<evidence type="ECO:0000305" key="2"/>
<dbReference type="EMBL" id="AE017321">
    <property type="protein sequence ID" value="AAW71220.1"/>
    <property type="molecule type" value="Genomic_DNA"/>
</dbReference>
<dbReference type="SMR" id="Q5GS04"/>
<dbReference type="STRING" id="292805.Wbm0632"/>
<dbReference type="KEGG" id="wbm:Wbm0632"/>
<dbReference type="eggNOG" id="COG0257">
    <property type="taxonomic scope" value="Bacteria"/>
</dbReference>
<dbReference type="HOGENOM" id="CLU_135723_3_2_5"/>
<dbReference type="Proteomes" id="UP000000534">
    <property type="component" value="Chromosome"/>
</dbReference>
<dbReference type="GO" id="GO:1990904">
    <property type="term" value="C:ribonucleoprotein complex"/>
    <property type="evidence" value="ECO:0007669"/>
    <property type="project" value="UniProtKB-KW"/>
</dbReference>
<dbReference type="GO" id="GO:0005840">
    <property type="term" value="C:ribosome"/>
    <property type="evidence" value="ECO:0007669"/>
    <property type="project" value="UniProtKB-KW"/>
</dbReference>
<dbReference type="GO" id="GO:0003735">
    <property type="term" value="F:structural constituent of ribosome"/>
    <property type="evidence" value="ECO:0007669"/>
    <property type="project" value="InterPro"/>
</dbReference>
<dbReference type="GO" id="GO:0006412">
    <property type="term" value="P:translation"/>
    <property type="evidence" value="ECO:0007669"/>
    <property type="project" value="UniProtKB-UniRule"/>
</dbReference>
<dbReference type="HAMAP" id="MF_00251">
    <property type="entry name" value="Ribosomal_bL36"/>
    <property type="match status" value="1"/>
</dbReference>
<dbReference type="InterPro" id="IPR000473">
    <property type="entry name" value="Ribosomal_bL36"/>
</dbReference>
<dbReference type="InterPro" id="IPR035977">
    <property type="entry name" value="Ribosomal_bL36_sp"/>
</dbReference>
<dbReference type="InterPro" id="IPR047621">
    <property type="entry name" value="Ribosomal_L36_bact"/>
</dbReference>
<dbReference type="NCBIfam" id="NF002021">
    <property type="entry name" value="PRK00831.1"/>
    <property type="match status" value="1"/>
</dbReference>
<dbReference type="NCBIfam" id="TIGR01022">
    <property type="entry name" value="rpmJ_bact"/>
    <property type="match status" value="1"/>
</dbReference>
<dbReference type="PANTHER" id="PTHR47781">
    <property type="entry name" value="50S RIBOSOMAL PROTEIN L36 2"/>
    <property type="match status" value="1"/>
</dbReference>
<dbReference type="PANTHER" id="PTHR47781:SF1">
    <property type="entry name" value="LARGE RIBOSOMAL SUBUNIT PROTEIN BL36B"/>
    <property type="match status" value="1"/>
</dbReference>
<dbReference type="Pfam" id="PF00444">
    <property type="entry name" value="Ribosomal_L36"/>
    <property type="match status" value="1"/>
</dbReference>
<dbReference type="SUPFAM" id="SSF57840">
    <property type="entry name" value="Ribosomal protein L36"/>
    <property type="match status" value="1"/>
</dbReference>
<gene>
    <name evidence="1" type="primary">rpmJ</name>
    <name type="ordered locus">Wbm0632</name>
</gene>
<protein>
    <recommendedName>
        <fullName evidence="1">Large ribosomal subunit protein bL36</fullName>
    </recommendedName>
    <alternativeName>
        <fullName evidence="2">50S ribosomal protein L36</fullName>
    </alternativeName>
</protein>
<proteinExistence type="inferred from homology"/>
<comment type="similarity">
    <text evidence="1">Belongs to the bacterial ribosomal protein bL36 family.</text>
</comment>
<accession>Q5GS04</accession>
<sequence>MKVKGSLKSHRNRDKNCKVVKRGGRIYIINEIKPRCKTRQGS</sequence>
<reference key="1">
    <citation type="journal article" date="2005" name="PLoS Biol.">
        <title>The Wolbachia genome of Brugia malayi: endosymbiont evolution within a human pathogenic nematode.</title>
        <authorList>
            <person name="Foster J."/>
            <person name="Ganatra M."/>
            <person name="Kamal I."/>
            <person name="Ware J."/>
            <person name="Makarova K."/>
            <person name="Ivanova N."/>
            <person name="Bhattacharyya A."/>
            <person name="Kapatral V."/>
            <person name="Kumar S."/>
            <person name="Posfai J."/>
            <person name="Vincze T."/>
            <person name="Ingram J."/>
            <person name="Moran L."/>
            <person name="Lapidus A."/>
            <person name="Omelchenko M."/>
            <person name="Kyrpides N."/>
            <person name="Ghedin E."/>
            <person name="Wang S."/>
            <person name="Goltsman E."/>
            <person name="Joukov V."/>
            <person name="Ostrovskaya O."/>
            <person name="Tsukerman K."/>
            <person name="Mazur M."/>
            <person name="Comb D."/>
            <person name="Koonin E."/>
            <person name="Slatko B."/>
        </authorList>
    </citation>
    <scope>NUCLEOTIDE SEQUENCE [LARGE SCALE GENOMIC DNA]</scope>
    <source>
        <strain>TRS</strain>
    </source>
</reference>
<keyword id="KW-1185">Reference proteome</keyword>
<keyword id="KW-0687">Ribonucleoprotein</keyword>
<keyword id="KW-0689">Ribosomal protein</keyword>
<feature type="chain" id="PRO_0000302331" description="Large ribosomal subunit protein bL36">
    <location>
        <begin position="1"/>
        <end position="42"/>
    </location>
</feature>
<name>RL36_WOLTR</name>